<keyword id="KW-0067">ATP-binding</keyword>
<keyword id="KW-0963">Cytoplasm</keyword>
<keyword id="KW-0275">Fatty acid biosynthesis</keyword>
<keyword id="KW-0276">Fatty acid metabolism</keyword>
<keyword id="KW-0444">Lipid biosynthesis</keyword>
<keyword id="KW-0443">Lipid metabolism</keyword>
<keyword id="KW-0547">Nucleotide-binding</keyword>
<keyword id="KW-1185">Reference proteome</keyword>
<keyword id="KW-0808">Transferase</keyword>
<evidence type="ECO:0000255" key="1">
    <source>
        <dbReference type="HAMAP-Rule" id="MF_00823"/>
    </source>
</evidence>
<evidence type="ECO:0000255" key="2">
    <source>
        <dbReference type="PROSITE-ProRule" id="PRU01137"/>
    </source>
</evidence>
<comment type="function">
    <text evidence="1">Component of the acetyl coenzyme A carboxylase (ACC) complex. First, biotin carboxylase catalyzes the carboxylation of biotin on its carrier protein (BCCP) and then the CO(2) group is transferred by the carboxyltransferase to acetyl-CoA to form malonyl-CoA.</text>
</comment>
<comment type="catalytic activity">
    <reaction evidence="1">
        <text>N(6)-carboxybiotinyl-L-lysyl-[protein] + acetyl-CoA = N(6)-biotinyl-L-lysyl-[protein] + malonyl-CoA</text>
        <dbReference type="Rhea" id="RHEA:54728"/>
        <dbReference type="Rhea" id="RHEA-COMP:10505"/>
        <dbReference type="Rhea" id="RHEA-COMP:10506"/>
        <dbReference type="ChEBI" id="CHEBI:57288"/>
        <dbReference type="ChEBI" id="CHEBI:57384"/>
        <dbReference type="ChEBI" id="CHEBI:83144"/>
        <dbReference type="ChEBI" id="CHEBI:83145"/>
        <dbReference type="EC" id="2.1.3.15"/>
    </reaction>
</comment>
<comment type="pathway">
    <text evidence="1">Lipid metabolism; malonyl-CoA biosynthesis; malonyl-CoA from acetyl-CoA: step 1/1.</text>
</comment>
<comment type="subunit">
    <text evidence="1">Acetyl-CoA carboxylase is a heterohexamer composed of biotin carboxyl carrier protein (AccB), biotin carboxylase (AccC) and two subunits each of ACCase subunit alpha (AccA) and ACCase subunit beta (AccD).</text>
</comment>
<comment type="subcellular location">
    <subcellularLocation>
        <location evidence="1">Cytoplasm</location>
    </subcellularLocation>
</comment>
<comment type="similarity">
    <text evidence="1">Belongs to the AccA family.</text>
</comment>
<name>ACCA_FLAPJ</name>
<feature type="chain" id="PRO_1000072882" description="Acetyl-coenzyme A carboxylase carboxyl transferase subunit alpha">
    <location>
        <begin position="1"/>
        <end position="317"/>
    </location>
</feature>
<feature type="domain" description="CoA carboxyltransferase C-terminal" evidence="2">
    <location>
        <begin position="37"/>
        <end position="292"/>
    </location>
</feature>
<reference key="1">
    <citation type="journal article" date="2007" name="Nat. Biotechnol.">
        <title>Complete genome sequence of the fish pathogen Flavobacterium psychrophilum.</title>
        <authorList>
            <person name="Duchaud E."/>
            <person name="Boussaha M."/>
            <person name="Loux V."/>
            <person name="Bernardet J.-F."/>
            <person name="Michel C."/>
            <person name="Kerouault B."/>
            <person name="Mondot S."/>
            <person name="Nicolas P."/>
            <person name="Bossy R."/>
            <person name="Caron C."/>
            <person name="Bessieres P."/>
            <person name="Gibrat J.-F."/>
            <person name="Claverol S."/>
            <person name="Dumetz F."/>
            <person name="Le Henaff M."/>
            <person name="Benmansour A."/>
        </authorList>
    </citation>
    <scope>NUCLEOTIDE SEQUENCE [LARGE SCALE GENOMIC DNA]</scope>
    <source>
        <strain>ATCC 49511 / DSM 21280 / CIP 103535 / JIP02/86</strain>
    </source>
</reference>
<dbReference type="EC" id="2.1.3.15" evidence="1"/>
<dbReference type="EMBL" id="AM398681">
    <property type="protein sequence ID" value="CAL42718.1"/>
    <property type="molecule type" value="Genomic_DNA"/>
</dbReference>
<dbReference type="RefSeq" id="WP_011962774.1">
    <property type="nucleotide sequence ID" value="NC_009613.3"/>
</dbReference>
<dbReference type="RefSeq" id="YP_001295534.1">
    <property type="nucleotide sequence ID" value="NC_009613.3"/>
</dbReference>
<dbReference type="SMR" id="A6GX95"/>
<dbReference type="STRING" id="402612.FP0613"/>
<dbReference type="EnsemblBacteria" id="CAL42718">
    <property type="protein sequence ID" value="CAL42718"/>
    <property type="gene ID" value="FP0613"/>
</dbReference>
<dbReference type="GeneID" id="66552708"/>
<dbReference type="KEGG" id="fps:FP0613"/>
<dbReference type="PATRIC" id="fig|402612.5.peg.626"/>
<dbReference type="eggNOG" id="COG0825">
    <property type="taxonomic scope" value="Bacteria"/>
</dbReference>
<dbReference type="HOGENOM" id="CLU_015486_0_2_10"/>
<dbReference type="OrthoDB" id="9808023at2"/>
<dbReference type="UniPathway" id="UPA00655">
    <property type="reaction ID" value="UER00711"/>
</dbReference>
<dbReference type="Proteomes" id="UP000006394">
    <property type="component" value="Chromosome"/>
</dbReference>
<dbReference type="GO" id="GO:0009317">
    <property type="term" value="C:acetyl-CoA carboxylase complex"/>
    <property type="evidence" value="ECO:0007669"/>
    <property type="project" value="InterPro"/>
</dbReference>
<dbReference type="GO" id="GO:0003989">
    <property type="term" value="F:acetyl-CoA carboxylase activity"/>
    <property type="evidence" value="ECO:0007669"/>
    <property type="project" value="InterPro"/>
</dbReference>
<dbReference type="GO" id="GO:0005524">
    <property type="term" value="F:ATP binding"/>
    <property type="evidence" value="ECO:0007669"/>
    <property type="project" value="UniProtKB-KW"/>
</dbReference>
<dbReference type="GO" id="GO:0016743">
    <property type="term" value="F:carboxyl- or carbamoyltransferase activity"/>
    <property type="evidence" value="ECO:0007669"/>
    <property type="project" value="UniProtKB-UniRule"/>
</dbReference>
<dbReference type="GO" id="GO:0006633">
    <property type="term" value="P:fatty acid biosynthetic process"/>
    <property type="evidence" value="ECO:0007669"/>
    <property type="project" value="UniProtKB-KW"/>
</dbReference>
<dbReference type="GO" id="GO:2001295">
    <property type="term" value="P:malonyl-CoA biosynthetic process"/>
    <property type="evidence" value="ECO:0007669"/>
    <property type="project" value="UniProtKB-UniRule"/>
</dbReference>
<dbReference type="Gene3D" id="3.90.226.10">
    <property type="entry name" value="2-enoyl-CoA Hydratase, Chain A, domain 1"/>
    <property type="match status" value="1"/>
</dbReference>
<dbReference type="HAMAP" id="MF_00823">
    <property type="entry name" value="AcetylCoA_CT_alpha"/>
    <property type="match status" value="1"/>
</dbReference>
<dbReference type="InterPro" id="IPR001095">
    <property type="entry name" value="Acetyl_CoA_COase_a_su"/>
</dbReference>
<dbReference type="InterPro" id="IPR029045">
    <property type="entry name" value="ClpP/crotonase-like_dom_sf"/>
</dbReference>
<dbReference type="InterPro" id="IPR011763">
    <property type="entry name" value="COA_CT_C"/>
</dbReference>
<dbReference type="NCBIfam" id="TIGR00513">
    <property type="entry name" value="accA"/>
    <property type="match status" value="1"/>
</dbReference>
<dbReference type="NCBIfam" id="NF041504">
    <property type="entry name" value="AccA_sub"/>
    <property type="match status" value="1"/>
</dbReference>
<dbReference type="NCBIfam" id="NF004344">
    <property type="entry name" value="PRK05724.1"/>
    <property type="match status" value="1"/>
</dbReference>
<dbReference type="PANTHER" id="PTHR42853">
    <property type="entry name" value="ACETYL-COENZYME A CARBOXYLASE CARBOXYL TRANSFERASE SUBUNIT ALPHA"/>
    <property type="match status" value="1"/>
</dbReference>
<dbReference type="PANTHER" id="PTHR42853:SF3">
    <property type="entry name" value="ACETYL-COENZYME A CARBOXYLASE CARBOXYL TRANSFERASE SUBUNIT ALPHA, CHLOROPLASTIC"/>
    <property type="match status" value="1"/>
</dbReference>
<dbReference type="Pfam" id="PF03255">
    <property type="entry name" value="ACCA"/>
    <property type="match status" value="1"/>
</dbReference>
<dbReference type="PRINTS" id="PR01069">
    <property type="entry name" value="ACCCTRFRASEA"/>
</dbReference>
<dbReference type="SUPFAM" id="SSF52096">
    <property type="entry name" value="ClpP/crotonase"/>
    <property type="match status" value="1"/>
</dbReference>
<dbReference type="PROSITE" id="PS50989">
    <property type="entry name" value="COA_CT_CTER"/>
    <property type="match status" value="1"/>
</dbReference>
<sequence length="317" mass="35769">MEYLDFELPIKELLEQLDKCQIIGTESNVDVTETCKQISQKLEDTKKDIYGNLTAWQRVQLSRHPSRPYTLEHITNLTKGTFLELFGDRNFKDDKAMIGGLGKIGDQSFMFVGQQKGINTKMRQFRNFGMPNPEGYRKALRLMKMAEKFNIPVVTLIDTPGAFPGIEAEERGQGEAIARNILEMARLKVPIICVIIGEGASGGALGIGVGDRVLMMENTWYSVISPESCSSILWKSWEYKEQAAEALKLTSADMKRQKIVDDIIPEPLGGAHYDKATAFKTVEEYILKAFNELKDLSTTDLVAQRMDKYSKMGEYNE</sequence>
<organism>
    <name type="scientific">Flavobacterium psychrophilum (strain ATCC 49511 / DSM 21280 / CIP 103535 / JIP02/86)</name>
    <dbReference type="NCBI Taxonomy" id="402612"/>
    <lineage>
        <taxon>Bacteria</taxon>
        <taxon>Pseudomonadati</taxon>
        <taxon>Bacteroidota</taxon>
        <taxon>Flavobacteriia</taxon>
        <taxon>Flavobacteriales</taxon>
        <taxon>Flavobacteriaceae</taxon>
        <taxon>Flavobacterium</taxon>
    </lineage>
</organism>
<proteinExistence type="inferred from homology"/>
<protein>
    <recommendedName>
        <fullName evidence="1">Acetyl-coenzyme A carboxylase carboxyl transferase subunit alpha</fullName>
        <shortName evidence="1">ACCase subunit alpha</shortName>
        <shortName evidence="1">Acetyl-CoA carboxylase carboxyltransferase subunit alpha</shortName>
        <ecNumber evidence="1">2.1.3.15</ecNumber>
    </recommendedName>
</protein>
<accession>A6GX95</accession>
<gene>
    <name evidence="1" type="primary">accA</name>
    <name type="ordered locus">FP0613</name>
</gene>